<gene>
    <name type="primary">aacA4</name>
</gene>
<organism>
    <name type="scientific">Serratia marcescens</name>
    <dbReference type="NCBI Taxonomy" id="615"/>
    <lineage>
        <taxon>Bacteria</taxon>
        <taxon>Pseudomonadati</taxon>
        <taxon>Pseudomonadota</taxon>
        <taxon>Gammaproteobacteria</taxon>
        <taxon>Enterobacterales</taxon>
        <taxon>Yersiniaceae</taxon>
        <taxon>Serratia</taxon>
    </lineage>
</organism>
<evidence type="ECO:0000250" key="1"/>
<evidence type="ECO:0000255" key="2">
    <source>
        <dbReference type="PROSITE-ProRule" id="PRU00532"/>
    </source>
</evidence>
<evidence type="ECO:0000269" key="3">
    <source>
    </source>
</evidence>
<comment type="function">
    <text evidence="3">Catalyzes the transfer of an acetyl group from acetyl-CoA to the 6'-amino group of aminoglycoside molecules conferring resistance to antibiotics containing the purpurosamine ring including amikacin and kanamycin.</text>
</comment>
<comment type="catalytic activity">
    <reaction evidence="3">
        <text>kanamycin B + acetyl-CoA = N(6')-acetylkanamycin B + CoA + H(+)</text>
        <dbReference type="Rhea" id="RHEA:16449"/>
        <dbReference type="ChEBI" id="CHEBI:15378"/>
        <dbReference type="ChEBI" id="CHEBI:57287"/>
        <dbReference type="ChEBI" id="CHEBI:57288"/>
        <dbReference type="ChEBI" id="CHEBI:58390"/>
        <dbReference type="ChEBI" id="CHEBI:58549"/>
        <dbReference type="EC" id="2.3.1.82"/>
    </reaction>
</comment>
<comment type="subunit">
    <text evidence="1">Homodimer.</text>
</comment>
<keyword id="KW-0012">Acyltransferase</keyword>
<keyword id="KW-0046">Antibiotic resistance</keyword>
<keyword id="KW-0903">Direct protein sequencing</keyword>
<keyword id="KW-0614">Plasmid</keyword>
<keyword id="KW-0808">Transferase</keyword>
<accession>P20092</accession>
<feature type="chain" id="PRO_0000068554" description="Aminoglycoside N(6')-acetyltransferase type 1">
    <location>
        <begin position="1"/>
        <end position="201"/>
    </location>
</feature>
<feature type="domain" description="N-acetyltransferase" evidence="2">
    <location>
        <begin position="25"/>
        <end position="192"/>
    </location>
</feature>
<feature type="binding site" evidence="1">
    <location>
        <position position="51"/>
    </location>
    <ligand>
        <name>substrate</name>
    </ligand>
</feature>
<feature type="binding site" evidence="1">
    <location>
        <position position="154"/>
    </location>
    <ligand>
        <name>substrate</name>
    </ligand>
</feature>
<feature type="binding site" evidence="1">
    <location>
        <position position="159"/>
    </location>
    <ligand>
        <name>acetyl-CoA</name>
        <dbReference type="ChEBI" id="CHEBI:57288"/>
    </ligand>
</feature>
<sequence length="201" mass="22579">MSIQHFQRKLGITKYSIVTNSNDSVTLRLMTEHDLAMLYEWLNRSHIVEWWGGEEARPTLADVQEQYLPSVLAQESVTPYIAMLNGEPIGYAQSYVALGSGDGWWEEETDPGVRGIDQLLANASQLGKGLGTKLVRALVELLFNDPEVTKIQTDPSPSNLRAIRCYEKAGFERQGTVTTPDGPAVYMVQTRQAFERTRRFA</sequence>
<proteinExistence type="evidence at protein level"/>
<geneLocation type="plasmid">
    <name>pAZ007</name>
</geneLocation>
<name>AAC6_SERMA</name>
<reference key="1">
    <citation type="journal article" date="1987" name="J. Bacteriol.">
        <title>Primary structure of an aminoglycoside 6'-N-acetyltransferase AAC(6')-4, fused in vivo with the signal peptide of the Tn3-encoded beta-lactamase.</title>
        <authorList>
            <person name="van Nhieu G.T."/>
            <person name="Collatz E."/>
        </authorList>
    </citation>
    <scope>NUCLEOTIDE SEQUENCE [GENOMIC DNA]</scope>
    <scope>PROTEIN SEQUENCE OF 2-18</scope>
    <scope>FUNCTION</scope>
    <scope>CATALYTIC ACTIVITY</scope>
    <source>
        <plasmid>pAZ007</plasmid>
    </source>
</reference>
<dbReference type="EC" id="2.3.1.82"/>
<dbReference type="EMBL" id="M23634">
    <property type="protein sequence ID" value="AAA26550.1"/>
    <property type="molecule type" value="Genomic_DNA"/>
</dbReference>
<dbReference type="PIR" id="A28388">
    <property type="entry name" value="A28388"/>
</dbReference>
<dbReference type="SMR" id="P20092"/>
<dbReference type="BRENDA" id="2.3.1.82">
    <property type="organism ID" value="5690"/>
</dbReference>
<dbReference type="GO" id="GO:0047663">
    <property type="term" value="F:aminoglycoside 6'-N-acetyltransferase activity"/>
    <property type="evidence" value="ECO:0000314"/>
    <property type="project" value="UniProtKB"/>
</dbReference>
<dbReference type="GO" id="GO:0046677">
    <property type="term" value="P:response to antibiotic"/>
    <property type="evidence" value="ECO:0000314"/>
    <property type="project" value="UniProtKB"/>
</dbReference>
<dbReference type="CDD" id="cd04301">
    <property type="entry name" value="NAT_SF"/>
    <property type="match status" value="1"/>
</dbReference>
<dbReference type="FunFam" id="3.40.630.30:FF:000025">
    <property type="entry name" value="Aminoglycoside acetyltransferase"/>
    <property type="match status" value="1"/>
</dbReference>
<dbReference type="Gene3D" id="3.40.630.30">
    <property type="match status" value="1"/>
</dbReference>
<dbReference type="InterPro" id="IPR016181">
    <property type="entry name" value="Acyl_CoA_acyltransferase"/>
</dbReference>
<dbReference type="InterPro" id="IPR000182">
    <property type="entry name" value="GNAT_dom"/>
</dbReference>
<dbReference type="InterPro" id="IPR030971">
    <property type="entry name" value="N6_acetyl_AAC6"/>
</dbReference>
<dbReference type="NCBIfam" id="NF033074">
    <property type="entry name" value="AAC_6p_Ib"/>
    <property type="match status" value="1"/>
</dbReference>
<dbReference type="NCBIfam" id="NF012165">
    <property type="entry name" value="AAC_6p_set_A"/>
    <property type="match status" value="1"/>
</dbReference>
<dbReference type="NCBIfam" id="TIGR04431">
    <property type="entry name" value="N6_acetyl_AAC6"/>
    <property type="match status" value="1"/>
</dbReference>
<dbReference type="PANTHER" id="PTHR31438">
    <property type="entry name" value="LYSINE N-ACYLTRANSFERASE C17G9.06C-RELATED"/>
    <property type="match status" value="1"/>
</dbReference>
<dbReference type="PANTHER" id="PTHR31438:SF1">
    <property type="entry name" value="LYSINE N-ACYLTRANSFERASE C17G9.06C-RELATED"/>
    <property type="match status" value="1"/>
</dbReference>
<dbReference type="Pfam" id="PF13523">
    <property type="entry name" value="Acetyltransf_8"/>
    <property type="match status" value="1"/>
</dbReference>
<dbReference type="SUPFAM" id="SSF55729">
    <property type="entry name" value="Acyl-CoA N-acyltransferases (Nat)"/>
    <property type="match status" value="1"/>
</dbReference>
<dbReference type="PROSITE" id="PS51186">
    <property type="entry name" value="GNAT"/>
    <property type="match status" value="1"/>
</dbReference>
<protein>
    <recommendedName>
        <fullName>Aminoglycoside N(6')-acetyltransferase type 1</fullName>
        <ecNumber>2.3.1.82</ecNumber>
    </recommendedName>
    <alternativeName>
        <fullName>AAC(6')-I</fullName>
    </alternativeName>
    <alternativeName>
        <fullName>Aminoglycoside resistance protein</fullName>
    </alternativeName>
</protein>